<organism>
    <name type="scientific">Borrelia hermsii (strain HS1 / DAH)</name>
    <dbReference type="NCBI Taxonomy" id="314723"/>
    <lineage>
        <taxon>Bacteria</taxon>
        <taxon>Pseudomonadati</taxon>
        <taxon>Spirochaetota</taxon>
        <taxon>Spirochaetia</taxon>
        <taxon>Spirochaetales</taxon>
        <taxon>Borreliaceae</taxon>
        <taxon>Borrelia</taxon>
    </lineage>
</organism>
<protein>
    <recommendedName>
        <fullName evidence="1">ATP-dependent protease subunit HslV</fullName>
        <ecNumber evidence="1">3.4.25.2</ecNumber>
    </recommendedName>
</protein>
<comment type="function">
    <text evidence="1">Protease subunit of a proteasome-like degradation complex believed to be a general protein degrading machinery.</text>
</comment>
<comment type="catalytic activity">
    <reaction evidence="1">
        <text>ATP-dependent cleavage of peptide bonds with broad specificity.</text>
        <dbReference type="EC" id="3.4.25.2"/>
    </reaction>
</comment>
<comment type="activity regulation">
    <text evidence="1">Allosterically activated by HslU binding.</text>
</comment>
<comment type="subunit">
    <text evidence="1">A double ring-shaped homohexamer of HslV is capped on each side by a ring-shaped HslU homohexamer. The assembly of the HslU/HslV complex is dependent on binding of ATP.</text>
</comment>
<comment type="subcellular location">
    <subcellularLocation>
        <location evidence="1">Cytoplasm</location>
    </subcellularLocation>
</comment>
<comment type="similarity">
    <text evidence="1">Belongs to the peptidase T1B family. HslV subfamily.</text>
</comment>
<keyword id="KW-0021">Allosteric enzyme</keyword>
<keyword id="KW-0963">Cytoplasm</keyword>
<keyword id="KW-0378">Hydrolase</keyword>
<keyword id="KW-0479">Metal-binding</keyword>
<keyword id="KW-0645">Protease</keyword>
<keyword id="KW-0915">Sodium</keyword>
<keyword id="KW-0888">Threonine protease</keyword>
<dbReference type="EC" id="3.4.25.2" evidence="1"/>
<dbReference type="EMBL" id="CP000048">
    <property type="protein sequence ID" value="AAX16813.1"/>
    <property type="molecule type" value="Genomic_DNA"/>
</dbReference>
<dbReference type="RefSeq" id="WP_012422070.1">
    <property type="nucleotide sequence ID" value="NZ_CP073136.1"/>
</dbReference>
<dbReference type="SMR" id="B2S007"/>
<dbReference type="GeneID" id="71843110"/>
<dbReference type="KEGG" id="bhr:BH0296"/>
<dbReference type="HOGENOM" id="CLU_093872_1_0_12"/>
<dbReference type="Proteomes" id="UP000008834">
    <property type="component" value="Chromosome"/>
</dbReference>
<dbReference type="GO" id="GO:0009376">
    <property type="term" value="C:HslUV protease complex"/>
    <property type="evidence" value="ECO:0007669"/>
    <property type="project" value="UniProtKB-UniRule"/>
</dbReference>
<dbReference type="GO" id="GO:0005839">
    <property type="term" value="C:proteasome core complex"/>
    <property type="evidence" value="ECO:0007669"/>
    <property type="project" value="InterPro"/>
</dbReference>
<dbReference type="GO" id="GO:0046872">
    <property type="term" value="F:metal ion binding"/>
    <property type="evidence" value="ECO:0007669"/>
    <property type="project" value="UniProtKB-KW"/>
</dbReference>
<dbReference type="GO" id="GO:0004298">
    <property type="term" value="F:threonine-type endopeptidase activity"/>
    <property type="evidence" value="ECO:0007669"/>
    <property type="project" value="UniProtKB-KW"/>
</dbReference>
<dbReference type="GO" id="GO:0051603">
    <property type="term" value="P:proteolysis involved in protein catabolic process"/>
    <property type="evidence" value="ECO:0007669"/>
    <property type="project" value="InterPro"/>
</dbReference>
<dbReference type="CDD" id="cd01913">
    <property type="entry name" value="protease_HslV"/>
    <property type="match status" value="1"/>
</dbReference>
<dbReference type="Gene3D" id="3.60.20.10">
    <property type="entry name" value="Glutamine Phosphoribosylpyrophosphate, subunit 1, domain 1"/>
    <property type="match status" value="1"/>
</dbReference>
<dbReference type="HAMAP" id="MF_00248">
    <property type="entry name" value="HslV"/>
    <property type="match status" value="1"/>
</dbReference>
<dbReference type="InterPro" id="IPR022281">
    <property type="entry name" value="ATP-dep_Prtase_HsIV_su"/>
</dbReference>
<dbReference type="InterPro" id="IPR029055">
    <property type="entry name" value="Ntn_hydrolases_N"/>
</dbReference>
<dbReference type="InterPro" id="IPR001353">
    <property type="entry name" value="Proteasome_sua/b"/>
</dbReference>
<dbReference type="InterPro" id="IPR023333">
    <property type="entry name" value="Proteasome_suB-type"/>
</dbReference>
<dbReference type="NCBIfam" id="TIGR03692">
    <property type="entry name" value="ATP_dep_HslV"/>
    <property type="match status" value="1"/>
</dbReference>
<dbReference type="NCBIfam" id="NF003964">
    <property type="entry name" value="PRK05456.1"/>
    <property type="match status" value="1"/>
</dbReference>
<dbReference type="PANTHER" id="PTHR32194:SF0">
    <property type="entry name" value="ATP-DEPENDENT PROTEASE SUBUNIT HSLV"/>
    <property type="match status" value="1"/>
</dbReference>
<dbReference type="PANTHER" id="PTHR32194">
    <property type="entry name" value="METALLOPROTEASE TLDD"/>
    <property type="match status" value="1"/>
</dbReference>
<dbReference type="Pfam" id="PF00227">
    <property type="entry name" value="Proteasome"/>
    <property type="match status" value="1"/>
</dbReference>
<dbReference type="PIRSF" id="PIRSF039093">
    <property type="entry name" value="HslV"/>
    <property type="match status" value="1"/>
</dbReference>
<dbReference type="SUPFAM" id="SSF56235">
    <property type="entry name" value="N-terminal nucleophile aminohydrolases (Ntn hydrolases)"/>
    <property type="match status" value="1"/>
</dbReference>
<dbReference type="PROSITE" id="PS51476">
    <property type="entry name" value="PROTEASOME_BETA_2"/>
    <property type="match status" value="1"/>
</dbReference>
<reference key="1">
    <citation type="submission" date="2004-12" db="EMBL/GenBank/DDBJ databases">
        <title>The genome sequence of Borrelia hermsii and Borrelia turicatae: comparative analysis of two agents of endemic N. America relapsing fever.</title>
        <authorList>
            <person name="Porcella S.F."/>
            <person name="Raffel S.J."/>
            <person name="Schrumpf M.E."/>
            <person name="Montgomery B."/>
            <person name="Smith T."/>
            <person name="Schwan T.G."/>
        </authorList>
    </citation>
    <scope>NUCLEOTIDE SEQUENCE [LARGE SCALE GENOMIC DNA]</scope>
    <source>
        <strain>HS1 / DAH</strain>
    </source>
</reference>
<sequence length="180" mass="19351">MSFKGTTVIAIRRGGKTAVAADGQVTFGYTVLKSNAVKIRKLVNGRILAGFAGSTSDAITLFEKFEEKVKAREDGIIDIKRAAVELAKDWRSDKILHKLEAMMLVADSENILLISGTGDVVEPEEDVISIGSGGNYAYSAALAYMENKKLSAADIAFKSLKVAAKVCIYTNSNIVLEEIS</sequence>
<feature type="chain" id="PRO_1000100872" description="ATP-dependent protease subunit HslV">
    <location>
        <begin position="1"/>
        <end position="180"/>
    </location>
</feature>
<feature type="active site" evidence="1">
    <location>
        <position position="6"/>
    </location>
</feature>
<feature type="binding site" evidence="1">
    <location>
        <position position="164"/>
    </location>
    <ligand>
        <name>Na(+)</name>
        <dbReference type="ChEBI" id="CHEBI:29101"/>
    </ligand>
</feature>
<feature type="binding site" evidence="1">
    <location>
        <position position="167"/>
    </location>
    <ligand>
        <name>Na(+)</name>
        <dbReference type="ChEBI" id="CHEBI:29101"/>
    </ligand>
</feature>
<feature type="binding site" evidence="1">
    <location>
        <position position="170"/>
    </location>
    <ligand>
        <name>Na(+)</name>
        <dbReference type="ChEBI" id="CHEBI:29101"/>
    </ligand>
</feature>
<evidence type="ECO:0000255" key="1">
    <source>
        <dbReference type="HAMAP-Rule" id="MF_00248"/>
    </source>
</evidence>
<proteinExistence type="inferred from homology"/>
<name>HSLV_BORHD</name>
<gene>
    <name evidence="1" type="primary">hslV</name>
    <name type="ordered locus">BH0296</name>
</gene>
<accession>B2S007</accession>